<sequence>MKGILGRKVGMTQLFTNEGILIPVTIVEVKPNVVTKVLTVEKDGYSATQLATEDKKASQIRRPEINKFKQANTTPKRFVKEIRNMTGYSLGDTIDASLFQAGEIVDVTAISKGKGFAGTIKRWNQHIGPKSHGGGGGSQPLRQTGSIGDISGNRVWKGMTMPGHLGSEQVTIQNLEIVKEDPANNMLVIKGSIPGAKGALVVIKKAIKTSHKKEAVQLLNLKEALAKNELFEQAKKYNVELNMQMSIKEMQTLLDEAIKKAEEQKQPEGENK</sequence>
<reference key="1">
    <citation type="journal article" date="2008" name="Infect. Immun.">
        <title>Genome of Mycoplasma arthritidis.</title>
        <authorList>
            <person name="Dybvig K."/>
            <person name="Zuhua C."/>
            <person name="Lao P."/>
            <person name="Jordan D.S."/>
            <person name="French C.T."/>
            <person name="Tu A.H."/>
            <person name="Loraine A.E."/>
        </authorList>
    </citation>
    <scope>NUCLEOTIDE SEQUENCE [LARGE SCALE GENOMIC DNA]</scope>
    <source>
        <strain>158L3-1</strain>
    </source>
</reference>
<gene>
    <name evidence="1" type="primary">rplC</name>
    <name type="ordered locus">MARTH_orf444</name>
</gene>
<name>RL3_META1</name>
<accession>B3PMP8</accession>
<proteinExistence type="inferred from homology"/>
<dbReference type="EMBL" id="CP001047">
    <property type="protein sequence ID" value="ACF07300.1"/>
    <property type="molecule type" value="Genomic_DNA"/>
</dbReference>
<dbReference type="RefSeq" id="WP_012498257.1">
    <property type="nucleotide sequence ID" value="NC_011025.1"/>
</dbReference>
<dbReference type="SMR" id="B3PMP8"/>
<dbReference type="STRING" id="243272.MARTH_orf444"/>
<dbReference type="KEGG" id="mat:MARTH_orf444"/>
<dbReference type="eggNOG" id="COG0087">
    <property type="taxonomic scope" value="Bacteria"/>
</dbReference>
<dbReference type="HOGENOM" id="CLU_044142_4_0_14"/>
<dbReference type="Proteomes" id="UP000008812">
    <property type="component" value="Chromosome"/>
</dbReference>
<dbReference type="GO" id="GO:0022625">
    <property type="term" value="C:cytosolic large ribosomal subunit"/>
    <property type="evidence" value="ECO:0007669"/>
    <property type="project" value="TreeGrafter"/>
</dbReference>
<dbReference type="GO" id="GO:0019843">
    <property type="term" value="F:rRNA binding"/>
    <property type="evidence" value="ECO:0007669"/>
    <property type="project" value="UniProtKB-UniRule"/>
</dbReference>
<dbReference type="GO" id="GO:0003735">
    <property type="term" value="F:structural constituent of ribosome"/>
    <property type="evidence" value="ECO:0007669"/>
    <property type="project" value="InterPro"/>
</dbReference>
<dbReference type="GO" id="GO:0006412">
    <property type="term" value="P:translation"/>
    <property type="evidence" value="ECO:0007669"/>
    <property type="project" value="UniProtKB-UniRule"/>
</dbReference>
<dbReference type="FunFam" id="2.40.30.10:FF:000004">
    <property type="entry name" value="50S ribosomal protein L3"/>
    <property type="match status" value="1"/>
</dbReference>
<dbReference type="Gene3D" id="3.30.160.810">
    <property type="match status" value="1"/>
</dbReference>
<dbReference type="Gene3D" id="2.40.30.10">
    <property type="entry name" value="Translation factors"/>
    <property type="match status" value="1"/>
</dbReference>
<dbReference type="HAMAP" id="MF_01325_B">
    <property type="entry name" value="Ribosomal_uL3_B"/>
    <property type="match status" value="1"/>
</dbReference>
<dbReference type="InterPro" id="IPR000597">
    <property type="entry name" value="Ribosomal_uL3"/>
</dbReference>
<dbReference type="InterPro" id="IPR019927">
    <property type="entry name" value="Ribosomal_uL3_bac/org-type"/>
</dbReference>
<dbReference type="InterPro" id="IPR019926">
    <property type="entry name" value="Ribosomal_uL3_CS"/>
</dbReference>
<dbReference type="InterPro" id="IPR009000">
    <property type="entry name" value="Transl_B-barrel_sf"/>
</dbReference>
<dbReference type="NCBIfam" id="TIGR03625">
    <property type="entry name" value="L3_bact"/>
    <property type="match status" value="1"/>
</dbReference>
<dbReference type="PANTHER" id="PTHR11229">
    <property type="entry name" value="50S RIBOSOMAL PROTEIN L3"/>
    <property type="match status" value="1"/>
</dbReference>
<dbReference type="PANTHER" id="PTHR11229:SF16">
    <property type="entry name" value="LARGE RIBOSOMAL SUBUNIT PROTEIN UL3C"/>
    <property type="match status" value="1"/>
</dbReference>
<dbReference type="Pfam" id="PF00297">
    <property type="entry name" value="Ribosomal_L3"/>
    <property type="match status" value="1"/>
</dbReference>
<dbReference type="SUPFAM" id="SSF50447">
    <property type="entry name" value="Translation proteins"/>
    <property type="match status" value="1"/>
</dbReference>
<dbReference type="PROSITE" id="PS00474">
    <property type="entry name" value="RIBOSOMAL_L3"/>
    <property type="match status" value="1"/>
</dbReference>
<comment type="function">
    <text evidence="1">One of the primary rRNA binding proteins, it binds directly near the 3'-end of the 23S rRNA, where it nucleates assembly of the 50S subunit.</text>
</comment>
<comment type="subunit">
    <text evidence="1">Part of the 50S ribosomal subunit. Forms a cluster with proteins L14 and L19.</text>
</comment>
<comment type="similarity">
    <text evidence="1">Belongs to the universal ribosomal protein uL3 family.</text>
</comment>
<feature type="chain" id="PRO_1000141890" description="Large ribosomal subunit protein uL3">
    <location>
        <begin position="1"/>
        <end position="272"/>
    </location>
</feature>
<feature type="region of interest" description="Disordered" evidence="2">
    <location>
        <begin position="125"/>
        <end position="146"/>
    </location>
</feature>
<protein>
    <recommendedName>
        <fullName evidence="1">Large ribosomal subunit protein uL3</fullName>
    </recommendedName>
    <alternativeName>
        <fullName evidence="3">50S ribosomal protein L3</fullName>
    </alternativeName>
</protein>
<organism>
    <name type="scientific">Metamycoplasma arthritidis (strain 158L3-1)</name>
    <name type="common">Mycoplasma arthritidis</name>
    <dbReference type="NCBI Taxonomy" id="243272"/>
    <lineage>
        <taxon>Bacteria</taxon>
        <taxon>Bacillati</taxon>
        <taxon>Mycoplasmatota</taxon>
        <taxon>Mycoplasmoidales</taxon>
        <taxon>Metamycoplasmataceae</taxon>
        <taxon>Metamycoplasma</taxon>
    </lineage>
</organism>
<keyword id="KW-1185">Reference proteome</keyword>
<keyword id="KW-0687">Ribonucleoprotein</keyword>
<keyword id="KW-0689">Ribosomal protein</keyword>
<keyword id="KW-0694">RNA-binding</keyword>
<keyword id="KW-0699">rRNA-binding</keyword>
<evidence type="ECO:0000255" key="1">
    <source>
        <dbReference type="HAMAP-Rule" id="MF_01325"/>
    </source>
</evidence>
<evidence type="ECO:0000256" key="2">
    <source>
        <dbReference type="SAM" id="MobiDB-lite"/>
    </source>
</evidence>
<evidence type="ECO:0000305" key="3"/>